<protein>
    <recommendedName>
        <fullName evidence="6">Highly reducing polyketide synthase Preu1</fullName>
        <ecNumber evidence="7">2.3.1.-</ecNumber>
    </recommendedName>
    <alternativeName>
        <fullName evidence="6">biosynthesis protein Preu1</fullName>
    </alternativeName>
</protein>
<dbReference type="EC" id="2.3.1.-" evidence="7"/>
<dbReference type="EMBL" id="OK493435">
    <property type="protein sequence ID" value="UNY67713.1"/>
    <property type="molecule type" value="mRNA"/>
</dbReference>
<dbReference type="SMR" id="P9WET8"/>
<dbReference type="GO" id="GO:0004315">
    <property type="term" value="F:3-oxoacyl-[acyl-carrier-protein] synthase activity"/>
    <property type="evidence" value="ECO:0007669"/>
    <property type="project" value="InterPro"/>
</dbReference>
<dbReference type="GO" id="GO:0004312">
    <property type="term" value="F:fatty acid synthase activity"/>
    <property type="evidence" value="ECO:0007669"/>
    <property type="project" value="TreeGrafter"/>
</dbReference>
<dbReference type="GO" id="GO:0016491">
    <property type="term" value="F:oxidoreductase activity"/>
    <property type="evidence" value="ECO:0007669"/>
    <property type="project" value="UniProtKB-KW"/>
</dbReference>
<dbReference type="GO" id="GO:0031177">
    <property type="term" value="F:phosphopantetheine binding"/>
    <property type="evidence" value="ECO:0007669"/>
    <property type="project" value="InterPro"/>
</dbReference>
<dbReference type="GO" id="GO:0006633">
    <property type="term" value="P:fatty acid biosynthetic process"/>
    <property type="evidence" value="ECO:0007669"/>
    <property type="project" value="InterPro"/>
</dbReference>
<dbReference type="GO" id="GO:0044550">
    <property type="term" value="P:secondary metabolite biosynthetic process"/>
    <property type="evidence" value="ECO:0007669"/>
    <property type="project" value="TreeGrafter"/>
</dbReference>
<dbReference type="CDD" id="cd05195">
    <property type="entry name" value="enoyl_red"/>
    <property type="match status" value="1"/>
</dbReference>
<dbReference type="CDD" id="cd00833">
    <property type="entry name" value="PKS"/>
    <property type="match status" value="1"/>
</dbReference>
<dbReference type="FunFam" id="3.40.47.10:FF:000019">
    <property type="entry name" value="Polyketide synthase type I"/>
    <property type="match status" value="1"/>
</dbReference>
<dbReference type="Gene3D" id="3.30.70.3290">
    <property type="match status" value="1"/>
</dbReference>
<dbReference type="Gene3D" id="3.40.47.10">
    <property type="match status" value="1"/>
</dbReference>
<dbReference type="Gene3D" id="1.10.1200.10">
    <property type="entry name" value="ACP-like"/>
    <property type="match status" value="1"/>
</dbReference>
<dbReference type="Gene3D" id="3.40.366.10">
    <property type="entry name" value="Malonyl-Coenzyme A Acyl Carrier Protein, domain 2"/>
    <property type="match status" value="1"/>
</dbReference>
<dbReference type="Gene3D" id="3.90.180.10">
    <property type="entry name" value="Medium-chain alcohol dehydrogenases, catalytic domain"/>
    <property type="match status" value="1"/>
</dbReference>
<dbReference type="Gene3D" id="3.40.50.720">
    <property type="entry name" value="NAD(P)-binding Rossmann-like Domain"/>
    <property type="match status" value="1"/>
</dbReference>
<dbReference type="Gene3D" id="3.10.129.110">
    <property type="entry name" value="Polyketide synthase dehydratase"/>
    <property type="match status" value="1"/>
</dbReference>
<dbReference type="Gene3D" id="3.40.50.150">
    <property type="entry name" value="Vaccinia Virus protein VP39"/>
    <property type="match status" value="1"/>
</dbReference>
<dbReference type="InterPro" id="IPR001227">
    <property type="entry name" value="Ac_transferase_dom_sf"/>
</dbReference>
<dbReference type="InterPro" id="IPR036736">
    <property type="entry name" value="ACP-like_sf"/>
</dbReference>
<dbReference type="InterPro" id="IPR014043">
    <property type="entry name" value="Acyl_transferase_dom"/>
</dbReference>
<dbReference type="InterPro" id="IPR016035">
    <property type="entry name" value="Acyl_Trfase/lysoPLipase"/>
</dbReference>
<dbReference type="InterPro" id="IPR013149">
    <property type="entry name" value="ADH-like_C"/>
</dbReference>
<dbReference type="InterPro" id="IPR011032">
    <property type="entry name" value="GroES-like_sf"/>
</dbReference>
<dbReference type="InterPro" id="IPR018201">
    <property type="entry name" value="Ketoacyl_synth_AS"/>
</dbReference>
<dbReference type="InterPro" id="IPR014031">
    <property type="entry name" value="Ketoacyl_synth_C"/>
</dbReference>
<dbReference type="InterPro" id="IPR014030">
    <property type="entry name" value="Ketoacyl_synth_N"/>
</dbReference>
<dbReference type="InterPro" id="IPR016036">
    <property type="entry name" value="Malonyl_transacylase_ACP-bd"/>
</dbReference>
<dbReference type="InterPro" id="IPR036291">
    <property type="entry name" value="NAD(P)-bd_dom_sf"/>
</dbReference>
<dbReference type="InterPro" id="IPR032821">
    <property type="entry name" value="PKS_assoc"/>
</dbReference>
<dbReference type="InterPro" id="IPR020841">
    <property type="entry name" value="PKS_Beta-ketoAc_synthase_dom"/>
</dbReference>
<dbReference type="InterPro" id="IPR042104">
    <property type="entry name" value="PKS_dehydratase_sf"/>
</dbReference>
<dbReference type="InterPro" id="IPR020807">
    <property type="entry name" value="PKS_DH"/>
</dbReference>
<dbReference type="InterPro" id="IPR049551">
    <property type="entry name" value="PKS_DH_C"/>
</dbReference>
<dbReference type="InterPro" id="IPR049552">
    <property type="entry name" value="PKS_DH_N"/>
</dbReference>
<dbReference type="InterPro" id="IPR020843">
    <property type="entry name" value="PKS_ER"/>
</dbReference>
<dbReference type="InterPro" id="IPR013968">
    <property type="entry name" value="PKS_KR"/>
</dbReference>
<dbReference type="InterPro" id="IPR049900">
    <property type="entry name" value="PKS_mFAS_DH"/>
</dbReference>
<dbReference type="InterPro" id="IPR050091">
    <property type="entry name" value="PKS_NRPS_Biosynth_Enz"/>
</dbReference>
<dbReference type="InterPro" id="IPR020806">
    <property type="entry name" value="PKS_PP-bd"/>
</dbReference>
<dbReference type="InterPro" id="IPR009081">
    <property type="entry name" value="PP-bd_ACP"/>
</dbReference>
<dbReference type="InterPro" id="IPR029063">
    <property type="entry name" value="SAM-dependent_MTases_sf"/>
</dbReference>
<dbReference type="InterPro" id="IPR016039">
    <property type="entry name" value="Thiolase-like"/>
</dbReference>
<dbReference type="PANTHER" id="PTHR43775:SF29">
    <property type="entry name" value="ASPERFURANONE POLYKETIDE SYNTHASE AFOG-RELATED"/>
    <property type="match status" value="1"/>
</dbReference>
<dbReference type="PANTHER" id="PTHR43775">
    <property type="entry name" value="FATTY ACID SYNTHASE"/>
    <property type="match status" value="1"/>
</dbReference>
<dbReference type="Pfam" id="PF00698">
    <property type="entry name" value="Acyl_transf_1"/>
    <property type="match status" value="1"/>
</dbReference>
<dbReference type="Pfam" id="PF00107">
    <property type="entry name" value="ADH_zinc_N"/>
    <property type="match status" value="1"/>
</dbReference>
<dbReference type="Pfam" id="PF16197">
    <property type="entry name" value="KAsynt_C_assoc"/>
    <property type="match status" value="1"/>
</dbReference>
<dbReference type="Pfam" id="PF00109">
    <property type="entry name" value="ketoacyl-synt"/>
    <property type="match status" value="1"/>
</dbReference>
<dbReference type="Pfam" id="PF02801">
    <property type="entry name" value="Ketoacyl-synt_C"/>
    <property type="match status" value="1"/>
</dbReference>
<dbReference type="Pfam" id="PF08659">
    <property type="entry name" value="KR"/>
    <property type="match status" value="1"/>
</dbReference>
<dbReference type="Pfam" id="PF21089">
    <property type="entry name" value="PKS_DH_N"/>
    <property type="match status" value="1"/>
</dbReference>
<dbReference type="Pfam" id="PF00550">
    <property type="entry name" value="PP-binding"/>
    <property type="match status" value="1"/>
</dbReference>
<dbReference type="Pfam" id="PF14765">
    <property type="entry name" value="PS-DH"/>
    <property type="match status" value="1"/>
</dbReference>
<dbReference type="SMART" id="SM00827">
    <property type="entry name" value="PKS_AT"/>
    <property type="match status" value="1"/>
</dbReference>
<dbReference type="SMART" id="SM00826">
    <property type="entry name" value="PKS_DH"/>
    <property type="match status" value="1"/>
</dbReference>
<dbReference type="SMART" id="SM00829">
    <property type="entry name" value="PKS_ER"/>
    <property type="match status" value="1"/>
</dbReference>
<dbReference type="SMART" id="SM00822">
    <property type="entry name" value="PKS_KR"/>
    <property type="match status" value="1"/>
</dbReference>
<dbReference type="SMART" id="SM00825">
    <property type="entry name" value="PKS_KS"/>
    <property type="match status" value="1"/>
</dbReference>
<dbReference type="SMART" id="SM00823">
    <property type="entry name" value="PKS_PP"/>
    <property type="match status" value="1"/>
</dbReference>
<dbReference type="SUPFAM" id="SSF47336">
    <property type="entry name" value="ACP-like"/>
    <property type="match status" value="1"/>
</dbReference>
<dbReference type="SUPFAM" id="SSF52151">
    <property type="entry name" value="FabD/lysophospholipase-like"/>
    <property type="match status" value="1"/>
</dbReference>
<dbReference type="SUPFAM" id="SSF50129">
    <property type="entry name" value="GroES-like"/>
    <property type="match status" value="1"/>
</dbReference>
<dbReference type="SUPFAM" id="SSF51735">
    <property type="entry name" value="NAD(P)-binding Rossmann-fold domains"/>
    <property type="match status" value="2"/>
</dbReference>
<dbReference type="SUPFAM" id="SSF55048">
    <property type="entry name" value="Probable ACP-binding domain of malonyl-CoA ACP transacylase"/>
    <property type="match status" value="1"/>
</dbReference>
<dbReference type="SUPFAM" id="SSF53335">
    <property type="entry name" value="S-adenosyl-L-methionine-dependent methyltransferases"/>
    <property type="match status" value="1"/>
</dbReference>
<dbReference type="SUPFAM" id="SSF53901">
    <property type="entry name" value="Thiolase-like"/>
    <property type="match status" value="1"/>
</dbReference>
<dbReference type="PROSITE" id="PS50075">
    <property type="entry name" value="CARRIER"/>
    <property type="match status" value="1"/>
</dbReference>
<dbReference type="PROSITE" id="PS00606">
    <property type="entry name" value="KS3_1"/>
    <property type="match status" value="1"/>
</dbReference>
<dbReference type="PROSITE" id="PS52004">
    <property type="entry name" value="KS3_2"/>
    <property type="match status" value="1"/>
</dbReference>
<dbReference type="PROSITE" id="PS52019">
    <property type="entry name" value="PKS_MFAS_DH"/>
    <property type="match status" value="1"/>
</dbReference>
<name>PREU1_PREIS</name>
<comment type="function">
    <text evidence="7">Highly reducing polyketide synthase; part of a gene cluster that mediates the biosynthesis of a yet unidentified natural product.</text>
</comment>
<comment type="cofactor">
    <cofactor evidence="2">
        <name>pantetheine 4'-phosphate</name>
        <dbReference type="ChEBI" id="CHEBI:47942"/>
    </cofactor>
</comment>
<comment type="domain">
    <text evidence="7">Multidomain protein; including a ketosynthase (KS) that catalyzes repeated decarboxylative condensation to elongate the polyketide backbone; a malonyl-CoA:ACP transacylase (MAT) that selects and transfers the extender unit malonyl-CoA; a dehydratase (DH) domain that reduces hydroxyl groups to enoyl groups; an enoyl reductase (ER) domain that reduces enoyl groups to alkyl group; a ketoreductase (KR) domain that catalyzes beta-ketoreduction steps; and an acyl-carrier protein (ACP) that serves as the tether of the growing and completed polyketide via its phosphopantetheinyl arm.</text>
</comment>
<keyword id="KW-0012">Acyltransferase</keyword>
<keyword id="KW-0511">Multifunctional enzyme</keyword>
<keyword id="KW-0521">NADP</keyword>
<keyword id="KW-0560">Oxidoreductase</keyword>
<keyword id="KW-0596">Phosphopantetheine</keyword>
<keyword id="KW-0597">Phosphoprotein</keyword>
<keyword id="KW-0808">Transferase</keyword>
<gene>
    <name evidence="6" type="primary">Preu1</name>
</gene>
<proteinExistence type="evidence at transcript level"/>
<feature type="chain" id="PRO_0000456454" description="Highly reducing polyketide synthase Preu1">
    <location>
        <begin position="1"/>
        <end position="2388"/>
    </location>
</feature>
<feature type="domain" description="Ketosynthase family 3 (KS3)" evidence="3 7">
    <location>
        <begin position="7"/>
        <end position="432"/>
    </location>
</feature>
<feature type="domain" description="PKS/mFAS DH" evidence="4">
    <location>
        <begin position="940"/>
        <end position="1256"/>
    </location>
</feature>
<feature type="domain" description="Carrier" evidence="2">
    <location>
        <begin position="2303"/>
        <end position="2380"/>
    </location>
</feature>
<feature type="region of interest" description="Malonyl-CoA:ACP transacylase (MAT) domain" evidence="1 7">
    <location>
        <begin position="549"/>
        <end position="875"/>
    </location>
</feature>
<feature type="region of interest" description="N-terminal hotdog fold" evidence="4">
    <location>
        <begin position="940"/>
        <end position="1074"/>
    </location>
</feature>
<feature type="region of interest" description="Dehydratase (DH) domain" evidence="1 7">
    <location>
        <begin position="941"/>
        <end position="1251"/>
    </location>
</feature>
<feature type="region of interest" description="C-terminal hotdog fold" evidence="4">
    <location>
        <begin position="1102"/>
        <end position="1256"/>
    </location>
</feature>
<feature type="region of interest" description="Enoyl reductase (ER) domain" evidence="1 7">
    <location>
        <begin position="1676"/>
        <end position="1983"/>
    </location>
</feature>
<feature type="region of interest" description="Ketoreductase (KR) domain" evidence="1 7">
    <location>
        <begin position="2007"/>
        <end position="2191"/>
    </location>
</feature>
<feature type="active site" description="For beta-ketoacyl synthase activity" evidence="3">
    <location>
        <position position="180"/>
    </location>
</feature>
<feature type="active site" description="For beta-ketoacyl synthase activity" evidence="3">
    <location>
        <position position="315"/>
    </location>
</feature>
<feature type="active site" description="For beta-ketoacyl synthase activity" evidence="3">
    <location>
        <position position="355"/>
    </location>
</feature>
<feature type="active site" description="For malonyltransferase activity" evidence="5">
    <location>
        <position position="641"/>
    </location>
</feature>
<feature type="active site" description="Proton acceptor; for dehydratase activity" evidence="4">
    <location>
        <position position="972"/>
    </location>
</feature>
<feature type="active site" description="Proton donor; for dehydratase activity" evidence="4">
    <location>
        <position position="1167"/>
    </location>
</feature>
<feature type="modified residue" description="O-(pantetheine 4'-phosphoryl)serine" evidence="2">
    <location>
        <position position="2340"/>
    </location>
</feature>
<organism>
    <name type="scientific">Preussia isomera</name>
    <name type="common">Coprophilous fungus</name>
    <name type="synonym">Honoratia pisana</name>
    <dbReference type="NCBI Taxonomy" id="325670"/>
    <lineage>
        <taxon>Eukaryota</taxon>
        <taxon>Fungi</taxon>
        <taxon>Dikarya</taxon>
        <taxon>Ascomycota</taxon>
        <taxon>Pezizomycotina</taxon>
        <taxon>Dothideomycetes</taxon>
        <taxon>Pleosporomycetidae</taxon>
        <taxon>Pleosporales</taxon>
        <taxon>Sporormiaceae</taxon>
        <taxon>Preussia/Sporomiella species complex</taxon>
        <taxon>Preussia</taxon>
    </lineage>
</organism>
<accession>P9WET8</accession>
<sequence>MASGPRNDDIAIVGLACRFPGGASNETKLWDLLSNRESAFTEVPPERFNVDAYHHPSPNKLNTLNSRGAHFMHEDVSAFDAPFFGITAQEANAMDPAARMLLELTFEALESAGQKLEDVAGSDTSCYVGCFTRDYHEMLYRDIESAPMYTGTGTGFSLFSNRISWFYDFRGPSMTLDTACSSSLVGLHLACRGLQAGESKMAVVCGANVILSPDIALTLSNLHMLSMDGLSRSFAEGTTGYGRGEGIASLILKRVEDALRDGDPIRAVIRGSGVNQDGHTKGITVPSSEAQADLIQTVYSSAGLDPSETGYFEAHGTGTAVGDPLELGAIAKSISKSRKVENKLVVGSIKSNIGHLEGAAGLAGVIKSVLMVEKNAILPNIHFEKPNRRIPFEQWKIKIPTELMPWPASGVRRASVNSFGYGGTNAHVILDDAESYLQKRLSNGHSEENGMELLKETRIFLLSARDEASLERLKQVYSDYIADVAGRRSPDNLFDESAYLDGLAYTLGCRRSVFPCRSFITASTLSELQESLSVQRLISTKAATSSRLGFVFTGQGAQWARMGLVLMDYPVFAQSIQEADRYLSEELRSSWSVLEELGKDAEHSQIGLAEFSQPLCTILQVALVDLLTSWQILPATVVGHSSGEIAAAYSFGAITKQDAWKISYWRGQLCAQLPLKRPELRGAMMAVGLGREEALSYIEKTGNGQAVIACVNSPSSVTLSGDETAINDIESALQAQNIFARKLNVQNAYHSHHMQPLADEYLAALEGLSTLSQEKAGTVKMASSVTGALINHTDLGPSYWVQNLVSPVLFSNAVEALLKQSTKGRRQARANEPAFDYLVEIGPHAALKGPLRQILQAHEASQIPYSSVLMRGEDGPVAALSAAGDLVCRGIQVDIKAVNRFQGRAIPLTNLPTYPWNHSLKYWADSRVSRARQHRKYGRHDLLGAPTQDSDELEPRWRHFLRVSDNPWIQDHIVHSSILYPGSGILAMPLHALQTLADSHRDVESIGLRDVSIVKAIVVPDDQFGLEVFLRMRRQRPRNGTWNGWWEFSVCSNQENDHVEEHGFGLGKIHYRPEKDTSVKTATNHVNDEFEREFDEVQATSTASISPVDFYAVAKSVGLTYGPSFQGLTEINAGNAKCSWKIQVPDTQKIMPAGVESPHIVHPTTLDIVFHSLFAAIGDGHLDMQHAAVPIGLKSMKISVDLPTGGNTFLKGISKVSRDAGRDIVADIRVAAESSNTPSIIVEGLRCRELPNGNSQSGPSETIKAPIGHVVQKIDVDLIEPIQLAQHIQKRFLERKEDGTLASEDLGEAIITIVDLVAHKNPRSSLLQVGGVTPELTQRILSNLEADNVSAKRFKNIKVVDANQELISQLETQYATPAGTVQFEKVTLDEAQSLAELKESSIDLAIVNIEELHSDKVSEYLANVLRSLKPGGKVLKIDSAGRNGAIGASDTLSFDTLCAGPEHVLSFATKGTAEKANTENFRTVILLPRCPSENVKKVASALEQVITVKGAIDTVIWSAEMPSLENSSTVISLLEFDDAFVADLSEEDFSSLKTLALGVKRILWVAHGTDPQMQTAAGWLRSLSNENMGIDYCYLLLESATDQEALDVAKLIERVSSTEEMEREYTERDDGLCCSRWAAKTELSALVGADSDQSKDATMRLGEARHGLTLTGKRGKLPSDARFTSVDVLDQNLTENEVMIDVRSVLLSTNDVQGTGQTGWREAAGVVVATGTAGSFEVGTAVSFVYDGPISTKAKINSKYCSTLSGTPEFQDALLQSVTYPTVYHGLCTLGQLRCDKTIFVQGGSSILGQAAISLARRLGATVFASVRDEEQNSILQRLGVPSDKILNDNVCERSSIIKRVNEGRGFDVIFNATGDEETIAELWQCIARGGKFINADANKKDTPATFNLSAKPFTMGASFEIIDMNEYLTNDFSTYQSIRDESESFRTRCSAVGLQIPVFTAGNIHEALDSVHVPTGLGKAVLLFSPDSKIPVSPDVKNQLRLRPDATYVLAGGLGGLGRSLAKLMVGSGARHLAFLSRSGPGSAAAQSISEEFSPLGVTVNFYGCDVADSESVSHTFGNIAKNQALPPIRGIIQSAAVLRDSIFENMSHTQWTEAVRPKVQGSWNLHQASLSGPCAKEGLDFFVMLASISGFVGNRGQANYAGGNSFQDALAKYRKSLGLAATSVDLGLMQDIGLIAERGGQSNLSDDTVVPLTAKDFELIFKLAMNSEGHDVPAQIVTGLPTGGILQKQGIETLPFYYRDPRFSAMQFMDLDETLTSAGGSAGNESVSMEEQLASAKSREQANGIVLEALRAQVAKALRCPAEDIDTARPLHYYGMDSLMAVDMRGWVQGKLKAEISLFDVMSGSSISALAEKISKASKLIKAELE</sequence>
<reference key="1">
    <citation type="journal article" date="2022" name="Front. Microbiol.">
        <title>Cloning and functional characterization of the polyketide synthases based on genome mining of Preussia isomera XL-1326.</title>
        <authorList>
            <person name="Liu Q."/>
            <person name="Zhang D."/>
            <person name="Xu Y."/>
            <person name="Gao S."/>
            <person name="Gong Y."/>
            <person name="Cai X."/>
            <person name="Yao M."/>
            <person name="Yang X."/>
        </authorList>
    </citation>
    <scope>NUCLEOTIDE SEQUENCE [MRNA]</scope>
    <scope>FUNCTION</scope>
    <scope>DOMAIN</scope>
    <source>
        <strain>XL-1326</strain>
    </source>
</reference>
<evidence type="ECO:0000255" key="1"/>
<evidence type="ECO:0000255" key="2">
    <source>
        <dbReference type="PROSITE-ProRule" id="PRU00258"/>
    </source>
</evidence>
<evidence type="ECO:0000255" key="3">
    <source>
        <dbReference type="PROSITE-ProRule" id="PRU01348"/>
    </source>
</evidence>
<evidence type="ECO:0000255" key="4">
    <source>
        <dbReference type="PROSITE-ProRule" id="PRU01363"/>
    </source>
</evidence>
<evidence type="ECO:0000255" key="5">
    <source>
        <dbReference type="PROSITE-ProRule" id="PRU10022"/>
    </source>
</evidence>
<evidence type="ECO:0000303" key="6">
    <source>
    </source>
</evidence>
<evidence type="ECO:0000305" key="7">
    <source>
    </source>
</evidence>